<keyword id="KW-1185">Reference proteome</keyword>
<keyword id="KW-0687">Ribonucleoprotein</keyword>
<keyword id="KW-0689">Ribosomal protein</keyword>
<keyword id="KW-0694">RNA-binding</keyword>
<keyword id="KW-0699">rRNA-binding</keyword>
<name>RL9_THEP3</name>
<reference key="1">
    <citation type="submission" date="2008-01" db="EMBL/GenBank/DDBJ databases">
        <title>Complete sequence of Thermoanaerobacter pseudethanolicus 39E.</title>
        <authorList>
            <person name="Copeland A."/>
            <person name="Lucas S."/>
            <person name="Lapidus A."/>
            <person name="Barry K."/>
            <person name="Glavina del Rio T."/>
            <person name="Dalin E."/>
            <person name="Tice H."/>
            <person name="Pitluck S."/>
            <person name="Bruce D."/>
            <person name="Goodwin L."/>
            <person name="Saunders E."/>
            <person name="Brettin T."/>
            <person name="Detter J.C."/>
            <person name="Han C."/>
            <person name="Schmutz J."/>
            <person name="Larimer F."/>
            <person name="Land M."/>
            <person name="Hauser L."/>
            <person name="Kyrpides N."/>
            <person name="Lykidis A."/>
            <person name="Hemme C."/>
            <person name="Fields M.W."/>
            <person name="He Z."/>
            <person name="Zhou J."/>
            <person name="Richardson P."/>
        </authorList>
    </citation>
    <scope>NUCLEOTIDE SEQUENCE [LARGE SCALE GENOMIC DNA]</scope>
    <source>
        <strain>ATCC 33223 / DSM 2355 / 39E</strain>
    </source>
</reference>
<protein>
    <recommendedName>
        <fullName evidence="1">Large ribosomal subunit protein bL9</fullName>
    </recommendedName>
    <alternativeName>
        <fullName evidence="2">50S ribosomal protein L9</fullName>
    </alternativeName>
</protein>
<dbReference type="EMBL" id="CP000924">
    <property type="protein sequence ID" value="ABY95890.1"/>
    <property type="molecule type" value="Genomic_DNA"/>
</dbReference>
<dbReference type="RefSeq" id="WP_003867437.1">
    <property type="nucleotide sequence ID" value="NC_010321.1"/>
</dbReference>
<dbReference type="SMR" id="B0K8F8"/>
<dbReference type="STRING" id="340099.Teth39_2269"/>
<dbReference type="KEGG" id="tpd:Teth39_2269"/>
<dbReference type="eggNOG" id="COG0359">
    <property type="taxonomic scope" value="Bacteria"/>
</dbReference>
<dbReference type="HOGENOM" id="CLU_078938_3_0_9"/>
<dbReference type="Proteomes" id="UP000002156">
    <property type="component" value="Chromosome"/>
</dbReference>
<dbReference type="GO" id="GO:1990904">
    <property type="term" value="C:ribonucleoprotein complex"/>
    <property type="evidence" value="ECO:0007669"/>
    <property type="project" value="UniProtKB-KW"/>
</dbReference>
<dbReference type="GO" id="GO:0005840">
    <property type="term" value="C:ribosome"/>
    <property type="evidence" value="ECO:0007669"/>
    <property type="project" value="UniProtKB-KW"/>
</dbReference>
<dbReference type="GO" id="GO:0019843">
    <property type="term" value="F:rRNA binding"/>
    <property type="evidence" value="ECO:0007669"/>
    <property type="project" value="UniProtKB-UniRule"/>
</dbReference>
<dbReference type="GO" id="GO:0003735">
    <property type="term" value="F:structural constituent of ribosome"/>
    <property type="evidence" value="ECO:0007669"/>
    <property type="project" value="InterPro"/>
</dbReference>
<dbReference type="GO" id="GO:0006412">
    <property type="term" value="P:translation"/>
    <property type="evidence" value="ECO:0007669"/>
    <property type="project" value="UniProtKB-UniRule"/>
</dbReference>
<dbReference type="FunFam" id="3.40.5.10:FF:000002">
    <property type="entry name" value="50S ribosomal protein L9"/>
    <property type="match status" value="1"/>
</dbReference>
<dbReference type="Gene3D" id="3.10.430.100">
    <property type="entry name" value="Ribosomal protein L9, C-terminal domain"/>
    <property type="match status" value="1"/>
</dbReference>
<dbReference type="Gene3D" id="3.40.5.10">
    <property type="entry name" value="Ribosomal protein L9, N-terminal domain"/>
    <property type="match status" value="1"/>
</dbReference>
<dbReference type="HAMAP" id="MF_00503">
    <property type="entry name" value="Ribosomal_bL9"/>
    <property type="match status" value="1"/>
</dbReference>
<dbReference type="InterPro" id="IPR000244">
    <property type="entry name" value="Ribosomal_bL9"/>
</dbReference>
<dbReference type="InterPro" id="IPR009027">
    <property type="entry name" value="Ribosomal_bL9/RNase_H1_N"/>
</dbReference>
<dbReference type="InterPro" id="IPR020594">
    <property type="entry name" value="Ribosomal_bL9_bac/chp"/>
</dbReference>
<dbReference type="InterPro" id="IPR020069">
    <property type="entry name" value="Ribosomal_bL9_C"/>
</dbReference>
<dbReference type="InterPro" id="IPR036791">
    <property type="entry name" value="Ribosomal_bL9_C_sf"/>
</dbReference>
<dbReference type="InterPro" id="IPR020070">
    <property type="entry name" value="Ribosomal_bL9_N"/>
</dbReference>
<dbReference type="InterPro" id="IPR036935">
    <property type="entry name" value="Ribosomal_bL9_N_sf"/>
</dbReference>
<dbReference type="NCBIfam" id="TIGR00158">
    <property type="entry name" value="L9"/>
    <property type="match status" value="1"/>
</dbReference>
<dbReference type="PANTHER" id="PTHR21368">
    <property type="entry name" value="50S RIBOSOMAL PROTEIN L9"/>
    <property type="match status" value="1"/>
</dbReference>
<dbReference type="Pfam" id="PF03948">
    <property type="entry name" value="Ribosomal_L9_C"/>
    <property type="match status" value="1"/>
</dbReference>
<dbReference type="Pfam" id="PF01281">
    <property type="entry name" value="Ribosomal_L9_N"/>
    <property type="match status" value="1"/>
</dbReference>
<dbReference type="SUPFAM" id="SSF55658">
    <property type="entry name" value="L9 N-domain-like"/>
    <property type="match status" value="1"/>
</dbReference>
<dbReference type="SUPFAM" id="SSF55653">
    <property type="entry name" value="Ribosomal protein L9 C-domain"/>
    <property type="match status" value="1"/>
</dbReference>
<dbReference type="PROSITE" id="PS00651">
    <property type="entry name" value="RIBOSOMAL_L9"/>
    <property type="match status" value="1"/>
</dbReference>
<organism>
    <name type="scientific">Thermoanaerobacter pseudethanolicus (strain ATCC 33223 / 39E)</name>
    <name type="common">Clostridium thermohydrosulfuricum</name>
    <dbReference type="NCBI Taxonomy" id="340099"/>
    <lineage>
        <taxon>Bacteria</taxon>
        <taxon>Bacillati</taxon>
        <taxon>Bacillota</taxon>
        <taxon>Clostridia</taxon>
        <taxon>Thermoanaerobacterales</taxon>
        <taxon>Thermoanaerobacteraceae</taxon>
        <taxon>Thermoanaerobacter</taxon>
    </lineage>
</organism>
<accession>B0K8F8</accession>
<comment type="function">
    <text evidence="1">Binds to the 23S rRNA.</text>
</comment>
<comment type="similarity">
    <text evidence="1">Belongs to the bacterial ribosomal protein bL9 family.</text>
</comment>
<evidence type="ECO:0000255" key="1">
    <source>
        <dbReference type="HAMAP-Rule" id="MF_00503"/>
    </source>
</evidence>
<evidence type="ECO:0000305" key="2"/>
<sequence length="147" mass="16291">MKVILVKDVKNVGKAGEIVNVSDGYGRNYLLPRGLAIEATESNVKALNEKKKAEEKKRQQELEEAKEMAQKLSNLSLVLKVKAGENGKLFGSVTSKDVEEALKEKGFDIDKKKIVFNENVKTTGTYYVDIKLYQGVTAKVKVDVVAE</sequence>
<gene>
    <name evidence="1" type="primary">rplI</name>
    <name type="ordered locus">Teth39_2269</name>
</gene>
<feature type="chain" id="PRO_1000126985" description="Large ribosomal subunit protein bL9">
    <location>
        <begin position="1"/>
        <end position="147"/>
    </location>
</feature>
<proteinExistence type="inferred from homology"/>